<sequence>GMICRHPIYLERTVRMIGSDIANTSKGTGVVHIAPAHGMDDFGIGQKHNLSTESSVNSDGEFMANIAPNLEGKFIFTSGNEAVVEMLKEEMNLFHEHDYKHSYPYDWRTKQPIFVHTSNQWFVDTAMLANKAEAAISGITTYPDNGISSMLNRLQLRSYWCISRQRAWGLPIPVFYHKESGELLLNESTIQHLVSLVLKHGADIWWEGTELLPTQYNADEYERGRDILDIWFDSGVSWDCVLRDSKNRTTQADFYIEGKDQYGGWFQSSLLTSVGLQGVAPYKNLMVHGFVLDEKGQKMSKSIGNVVDPMVLTNGGKNPQRDPAYGADALRWWVAESNVHQDVHISTTIIKSAAESVQKIRNSVRFMLGNLNEFDKMKIVPTPAMLILDLRYRFEDKKLWYVTSMNYPLNLSV</sequence>
<dbReference type="EC" id="6.1.1.5"/>
<dbReference type="EMBL" id="Z80904">
    <property type="protein sequence ID" value="CAB02584.1"/>
    <property type="molecule type" value="Genomic_DNA"/>
</dbReference>
<dbReference type="PIR" id="T31663">
    <property type="entry name" value="T31663"/>
</dbReference>
<dbReference type="SMR" id="Q94425"/>
<dbReference type="STRING" id="7719.ENSCINP00000017328"/>
<dbReference type="eggNOG" id="KOG0433">
    <property type="taxonomic scope" value="Eukaryota"/>
</dbReference>
<dbReference type="InParanoid" id="Q94425"/>
<dbReference type="Proteomes" id="UP000008144">
    <property type="component" value="Unplaced"/>
</dbReference>
<dbReference type="GO" id="GO:0005759">
    <property type="term" value="C:mitochondrial matrix"/>
    <property type="evidence" value="ECO:0007669"/>
    <property type="project" value="UniProtKB-SubCell"/>
</dbReference>
<dbReference type="GO" id="GO:0005739">
    <property type="term" value="C:mitochondrion"/>
    <property type="evidence" value="ECO:0000318"/>
    <property type="project" value="GO_Central"/>
</dbReference>
<dbReference type="GO" id="GO:0002161">
    <property type="term" value="F:aminoacyl-tRNA deacylase activity"/>
    <property type="evidence" value="ECO:0007669"/>
    <property type="project" value="InterPro"/>
</dbReference>
<dbReference type="GO" id="GO:0005524">
    <property type="term" value="F:ATP binding"/>
    <property type="evidence" value="ECO:0007669"/>
    <property type="project" value="UniProtKB-KW"/>
</dbReference>
<dbReference type="GO" id="GO:0004822">
    <property type="term" value="F:isoleucine-tRNA ligase activity"/>
    <property type="evidence" value="ECO:0000318"/>
    <property type="project" value="GO_Central"/>
</dbReference>
<dbReference type="GO" id="GO:0006428">
    <property type="term" value="P:isoleucyl-tRNA aminoacylation"/>
    <property type="evidence" value="ECO:0000318"/>
    <property type="project" value="GO_Central"/>
</dbReference>
<dbReference type="GO" id="GO:0032543">
    <property type="term" value="P:mitochondrial translation"/>
    <property type="evidence" value="ECO:0000318"/>
    <property type="project" value="GO_Central"/>
</dbReference>
<dbReference type="FunFam" id="3.40.50.620:FF:000128">
    <property type="entry name" value="Isoleucyl-tRNA synthetase 2, mitochondrial"/>
    <property type="match status" value="1"/>
</dbReference>
<dbReference type="Gene3D" id="1.10.730.20">
    <property type="match status" value="1"/>
</dbReference>
<dbReference type="Gene3D" id="3.40.50.620">
    <property type="entry name" value="HUPs"/>
    <property type="match status" value="1"/>
</dbReference>
<dbReference type="Gene3D" id="1.10.10.830">
    <property type="entry name" value="Ile-tRNA synthetase CP2 domain-like"/>
    <property type="match status" value="1"/>
</dbReference>
<dbReference type="InterPro" id="IPR002300">
    <property type="entry name" value="aa-tRNA-synth_Ia"/>
</dbReference>
<dbReference type="InterPro" id="IPR002301">
    <property type="entry name" value="Ile-tRNA-ligase"/>
</dbReference>
<dbReference type="InterPro" id="IPR050081">
    <property type="entry name" value="Ile-tRNA_ligase"/>
</dbReference>
<dbReference type="InterPro" id="IPR014729">
    <property type="entry name" value="Rossmann-like_a/b/a_fold"/>
</dbReference>
<dbReference type="InterPro" id="IPR009008">
    <property type="entry name" value="Val/Leu/Ile-tRNA-synth_edit"/>
</dbReference>
<dbReference type="PANTHER" id="PTHR42765:SF1">
    <property type="entry name" value="ISOLEUCINE--TRNA LIGASE, MITOCHONDRIAL"/>
    <property type="match status" value="1"/>
</dbReference>
<dbReference type="PANTHER" id="PTHR42765">
    <property type="entry name" value="SOLEUCYL-TRNA SYNTHETASE"/>
    <property type="match status" value="1"/>
</dbReference>
<dbReference type="Pfam" id="PF00133">
    <property type="entry name" value="tRNA-synt_1"/>
    <property type="match status" value="1"/>
</dbReference>
<dbReference type="PRINTS" id="PR00984">
    <property type="entry name" value="TRNASYNTHILE"/>
</dbReference>
<dbReference type="SUPFAM" id="SSF52374">
    <property type="entry name" value="Nucleotidylyl transferase"/>
    <property type="match status" value="1"/>
</dbReference>
<dbReference type="SUPFAM" id="SSF50677">
    <property type="entry name" value="ValRS/IleRS/LeuRS editing domain"/>
    <property type="match status" value="1"/>
</dbReference>
<feature type="chain" id="PRO_0000098600" description="Probable isoleucine--tRNA ligase, mitochondrial">
    <location>
        <begin position="1" status="less than"/>
        <end position="413"/>
    </location>
</feature>
<feature type="short sequence motif" description="'KMSKS' region">
    <location>
        <begin position="298"/>
        <end position="302"/>
    </location>
</feature>
<feature type="binding site" evidence="1">
    <location>
        <position position="301"/>
    </location>
    <ligand>
        <name>ATP</name>
        <dbReference type="ChEBI" id="CHEBI:30616"/>
    </ligand>
</feature>
<feature type="non-terminal residue">
    <location>
        <position position="1"/>
    </location>
</feature>
<comment type="catalytic activity">
    <reaction>
        <text>tRNA(Ile) + L-isoleucine + ATP = L-isoleucyl-tRNA(Ile) + AMP + diphosphate</text>
        <dbReference type="Rhea" id="RHEA:11060"/>
        <dbReference type="Rhea" id="RHEA-COMP:9666"/>
        <dbReference type="Rhea" id="RHEA-COMP:9695"/>
        <dbReference type="ChEBI" id="CHEBI:30616"/>
        <dbReference type="ChEBI" id="CHEBI:33019"/>
        <dbReference type="ChEBI" id="CHEBI:58045"/>
        <dbReference type="ChEBI" id="CHEBI:78442"/>
        <dbReference type="ChEBI" id="CHEBI:78528"/>
        <dbReference type="ChEBI" id="CHEBI:456215"/>
        <dbReference type="EC" id="6.1.1.5"/>
    </reaction>
</comment>
<comment type="subcellular location">
    <subcellularLocation>
        <location evidence="1">Mitochondrion matrix</location>
    </subcellularLocation>
</comment>
<comment type="similarity">
    <text evidence="2">Belongs to the class-I aminoacyl-tRNA synthetase family.</text>
</comment>
<reference key="1">
    <citation type="submission" date="1996-10" db="EMBL/GenBank/DDBJ databases">
        <authorList>
            <person name="Bird A.P."/>
            <person name="Clark V."/>
            <person name="Jones S.J.M."/>
            <person name="Leitgeb S."/>
            <person name="Lennard N."/>
            <person name="Tweedie S."/>
        </authorList>
    </citation>
    <scope>NUCLEOTIDE SEQUENCE [GENOMIC DNA]</scope>
</reference>
<evidence type="ECO:0000250" key="1"/>
<evidence type="ECO:0000305" key="2"/>
<proteinExistence type="inferred from homology"/>
<keyword id="KW-0030">Aminoacyl-tRNA synthetase</keyword>
<keyword id="KW-0067">ATP-binding</keyword>
<keyword id="KW-0436">Ligase</keyword>
<keyword id="KW-0496">Mitochondrion</keyword>
<keyword id="KW-0547">Nucleotide-binding</keyword>
<keyword id="KW-0648">Protein biosynthesis</keyword>
<keyword id="KW-1185">Reference proteome</keyword>
<name>SYIM_CIOIN</name>
<accession>Q94425</accession>
<organism>
    <name type="scientific">Ciona intestinalis</name>
    <name type="common">Transparent sea squirt</name>
    <name type="synonym">Ascidia intestinalis</name>
    <dbReference type="NCBI Taxonomy" id="7719"/>
    <lineage>
        <taxon>Eukaryota</taxon>
        <taxon>Metazoa</taxon>
        <taxon>Chordata</taxon>
        <taxon>Tunicata</taxon>
        <taxon>Ascidiacea</taxon>
        <taxon>Phlebobranchia</taxon>
        <taxon>Cionidae</taxon>
        <taxon>Ciona</taxon>
    </lineage>
</organism>
<protein>
    <recommendedName>
        <fullName>Probable isoleucine--tRNA ligase, mitochondrial</fullName>
        <ecNumber>6.1.1.5</ecNumber>
    </recommendedName>
    <alternativeName>
        <fullName>Isoleucyl-tRNA synthetase</fullName>
        <shortName>IleRS</shortName>
    </alternativeName>
</protein>